<sequence length="320" mass="36227">MIPRFDFPWPSACHPHARQAEQGALAFAERHGLVPTAAYRSRLERTRYGWLAARCYPDADDVLLQLCADYFIWFFIVDDLFVDRVDTLSERTIPNLTAMIDVLDHHRPGAEPVFGEHAWLDVCTRLRAYLSDEHFQRFAHGMRMWAATAGLQIANHLGADTVDVAPYETIRRHTSGTNPCLALADAAKHGPVTPAEYHSPPVQRLVLHANNVVCWSNDVQSLKMELNQPGQYWNMAAIYAHRGLSLQQAVDLVALRVRGEIASFQSLALTLEPHASRPLRGFVDGLRHWMRGYQDWVENDTLRYADAFIAEDADDTAVRT</sequence>
<keyword id="KW-0456">Lyase</keyword>
<keyword id="KW-0460">Magnesium</keyword>
<keyword id="KW-0479">Metal-binding</keyword>
<keyword id="KW-1185">Reference proteome</keyword>
<comment type="function">
    <text evidence="2 3">Catalyzes the conversion of (2E,6E)-farnesyl diphosphate (FPP) into (+)-corvol ether A and (+)-corvol ether B via a 1,10-cyclization, which requires isomerization of FPP to nerolidyl diphosphate (NPP) and then abstraction of the pyrophosphate from intermediate NPP leading to a (E,Z)-germacradienyl (helminthogermacradienyl) cation (PubMed:25809275, PubMed:27666571). The preferred substrate is (2E,6E)-farnesyl diphosphate (FPP), however geranyl diphosphate (GPP) is also able to produce small amounts of several acyclic and cyclic monoterpenes, with linalool as the main product (PubMed:25809275).</text>
</comment>
<comment type="catalytic activity">
    <reaction evidence="2 3">
        <text>(2E,6E)-farnesyl diphosphate + H2O = (+)-corvol ether B + diphosphate</text>
        <dbReference type="Rhea" id="RHEA:53644"/>
        <dbReference type="ChEBI" id="CHEBI:15377"/>
        <dbReference type="ChEBI" id="CHEBI:33019"/>
        <dbReference type="ChEBI" id="CHEBI:137536"/>
        <dbReference type="ChEBI" id="CHEBI:175763"/>
        <dbReference type="EC" id="4.2.3.163"/>
    </reaction>
</comment>
<comment type="catalytic activity">
    <reaction evidence="2 3">
        <text>(2E,6E)-farnesyl diphosphate + H2O = (+)-corvol ether A + diphosphate</text>
        <dbReference type="Rhea" id="RHEA:53648"/>
        <dbReference type="ChEBI" id="CHEBI:15377"/>
        <dbReference type="ChEBI" id="CHEBI:33019"/>
        <dbReference type="ChEBI" id="CHEBI:137535"/>
        <dbReference type="ChEBI" id="CHEBI:175763"/>
        <dbReference type="EC" id="4.2.3.171"/>
    </reaction>
</comment>
<comment type="cofactor">
    <cofactor evidence="1">
        <name>Mg(2+)</name>
        <dbReference type="ChEBI" id="CHEBI:18420"/>
    </cofactor>
    <text evidence="1">Binds 3 Mg(2+) ions per subunit.</text>
</comment>
<comment type="pathway">
    <text evidence="5">Secondary metabolite biosynthesis; terpenoid biosynthesis.</text>
</comment>
<comment type="domain">
    <text evidence="5">The Asp-Asp-Xaa-Xaa-Xaa-Asp (DDXXXD) motif is important for the catalytic activity, presumably through binding to Mg(2+).</text>
</comment>
<comment type="similarity">
    <text evidence="5">Belongs to the terpene synthase family.</text>
</comment>
<gene>
    <name evidence="6" type="ordered locus">KSE_12950</name>
</gene>
<accession>E4N7E5</accession>
<organism>
    <name type="scientific">Kitasatospora setae (strain ATCC 33774 / DSM 43861 / JCM 3304 / KCC A-0304 / NBRC 14216 / KM-6054)</name>
    <name type="common">Streptomyces setae</name>
    <dbReference type="NCBI Taxonomy" id="452652"/>
    <lineage>
        <taxon>Bacteria</taxon>
        <taxon>Bacillati</taxon>
        <taxon>Actinomycetota</taxon>
        <taxon>Actinomycetes</taxon>
        <taxon>Kitasatosporales</taxon>
        <taxon>Streptomycetaceae</taxon>
        <taxon>Kitasatospora</taxon>
    </lineage>
</organism>
<evidence type="ECO:0000250" key="1">
    <source>
        <dbReference type="UniProtKB" id="B5HDJ6"/>
    </source>
</evidence>
<evidence type="ECO:0000269" key="2">
    <source>
    </source>
</evidence>
<evidence type="ECO:0000269" key="3">
    <source>
    </source>
</evidence>
<evidence type="ECO:0000303" key="4">
    <source>
    </source>
</evidence>
<evidence type="ECO:0000305" key="5"/>
<evidence type="ECO:0000312" key="6">
    <source>
        <dbReference type="EMBL" id="BAJ27126.1"/>
    </source>
</evidence>
<evidence type="ECO:0000312" key="7">
    <source>
        <dbReference type="Proteomes" id="UP000007076"/>
    </source>
</evidence>
<reference key="1">
    <citation type="journal article" date="2010" name="DNA Res.">
        <title>Genome sequence of Kitasatospora setae NBRC 14216T: an evolutionary snapshot of the family Streptomycetaceae.</title>
        <authorList>
            <person name="Ichikawa N."/>
            <person name="Oguchi A."/>
            <person name="Ikeda H."/>
            <person name="Ishikawa J."/>
            <person name="Kitani S."/>
            <person name="Watanabe Y."/>
            <person name="Nakamura S."/>
            <person name="Katano Y."/>
            <person name="Kishi E."/>
            <person name="Sasagawa M."/>
            <person name="Ankai A."/>
            <person name="Fukui S."/>
            <person name="Hashimoto Y."/>
            <person name="Kamata S."/>
            <person name="Otoguro M."/>
            <person name="Tanikawa S."/>
            <person name="Nihira T."/>
            <person name="Horinouchi S."/>
            <person name="Ohnishi Y."/>
            <person name="Hayakawa M."/>
            <person name="Kuzuyama T."/>
            <person name="Arisawa A."/>
            <person name="Nomoto F."/>
            <person name="Miura H."/>
            <person name="Takahashi Y."/>
            <person name="Fujita N."/>
        </authorList>
    </citation>
    <scope>NUCLEOTIDE SEQUENCE [LARGE SCALE GENOMIC DNA]</scope>
    <source>
        <strain evidence="7">ATCC 33774 / DSM 43861 / JCM 3304 / KCC A-0304 / NBRC 14216 / KM-6054</strain>
    </source>
</reference>
<reference key="2">
    <citation type="journal article" date="2015" name="Angew. Chem. Int. Ed.">
        <title>Structures and biosynthesis of corvol ethers--sesquiterpenes from the actinomycete Kitasatospora setae.</title>
        <authorList>
            <person name="Rabe P."/>
            <person name="Pahirulzaman K.A."/>
            <person name="Dickschat J.S."/>
        </authorList>
    </citation>
    <scope>FUNCTION</scope>
    <scope>CATALYTIC ACTIVITY</scope>
    <scope>SUBSTRATE SPECIFICITY</scope>
    <scope>REACTION MECHANISM</scope>
    <source>
        <strain>ATCC 33774 / DSM 43861 / JCM 3304 / KCC A-0304 / NBRC 14216 / KM-6054</strain>
    </source>
</reference>
<reference key="3">
    <citation type="journal article" date="2016" name="Angew. Chem. Int. Ed.">
        <title>Lessons from 1,3-hydride shifts in sesquiterpene cyclizations.</title>
        <authorList>
            <person name="Rinkel J."/>
            <person name="Rabe P."/>
            <person name="Garbeva P."/>
            <person name="Dickschat J.S."/>
        </authorList>
    </citation>
    <scope>FUNCTION</scope>
    <scope>CATALYTIC ACTIVITY</scope>
    <scope>REACTION MECHANISM</scope>
    <source>
        <strain>ATCC 33774 / DSM 43861 / JCM 3304 / KCC A-0304 / NBRC 14216 / KM-6054</strain>
    </source>
</reference>
<proteinExistence type="evidence at protein level"/>
<protein>
    <recommendedName>
        <fullName evidence="4">(+)-corvol ether B synthase/(+)-corvol ether A synthase ((2E,6E)-farnesyl diphosphate cyclizing)</fullName>
        <ecNumber evidence="2 3">4.2.3.163</ecNumber>
        <ecNumber evidence="2 3">4.2.3.171</ecNumber>
    </recommendedName>
    <alternativeName>
        <fullName evidence="4">Terpene synthase</fullName>
    </alternativeName>
    <alternativeName>
        <fullName evidence="4">Type I terpene cyclase</fullName>
    </alternativeName>
</protein>
<dbReference type="EC" id="4.2.3.163" evidence="2 3"/>
<dbReference type="EC" id="4.2.3.171" evidence="2 3"/>
<dbReference type="EMBL" id="AP010968">
    <property type="protein sequence ID" value="BAJ27126.1"/>
    <property type="molecule type" value="Genomic_DNA"/>
</dbReference>
<dbReference type="RefSeq" id="WP_014134444.1">
    <property type="nucleotide sequence ID" value="NC_016109.1"/>
</dbReference>
<dbReference type="SMR" id="E4N7E5"/>
<dbReference type="STRING" id="452652.KSE_12950"/>
<dbReference type="KEGG" id="ksk:KSE_12950"/>
<dbReference type="PATRIC" id="fig|452652.3.peg.1291"/>
<dbReference type="eggNOG" id="ENOG502Z881">
    <property type="taxonomic scope" value="Bacteria"/>
</dbReference>
<dbReference type="HOGENOM" id="CLU_042538_2_1_11"/>
<dbReference type="BRENDA" id="4.2.3.163">
    <property type="organism ID" value="13720"/>
</dbReference>
<dbReference type="BRENDA" id="4.2.3.171">
    <property type="organism ID" value="13720"/>
</dbReference>
<dbReference type="UniPathway" id="UPA00213"/>
<dbReference type="Proteomes" id="UP000007076">
    <property type="component" value="Chromosome"/>
</dbReference>
<dbReference type="GO" id="GO:0046872">
    <property type="term" value="F:metal ion binding"/>
    <property type="evidence" value="ECO:0007669"/>
    <property type="project" value="UniProtKB-KW"/>
</dbReference>
<dbReference type="GO" id="GO:0010333">
    <property type="term" value="F:terpene synthase activity"/>
    <property type="evidence" value="ECO:0007669"/>
    <property type="project" value="InterPro"/>
</dbReference>
<dbReference type="GO" id="GO:0016114">
    <property type="term" value="P:terpenoid biosynthetic process"/>
    <property type="evidence" value="ECO:0007669"/>
    <property type="project" value="UniProtKB-UniPathway"/>
</dbReference>
<dbReference type="Gene3D" id="1.10.600.10">
    <property type="entry name" value="Farnesyl Diphosphate Synthase"/>
    <property type="match status" value="1"/>
</dbReference>
<dbReference type="InterPro" id="IPR008949">
    <property type="entry name" value="Isoprenoid_synthase_dom_sf"/>
</dbReference>
<dbReference type="InterPro" id="IPR034686">
    <property type="entry name" value="Terpene_cyclase-like_2"/>
</dbReference>
<dbReference type="PANTHER" id="PTHR35201:SF4">
    <property type="entry name" value="BETA-PINACENE SYNTHASE-RELATED"/>
    <property type="match status" value="1"/>
</dbReference>
<dbReference type="PANTHER" id="PTHR35201">
    <property type="entry name" value="TERPENE SYNTHASE"/>
    <property type="match status" value="1"/>
</dbReference>
<dbReference type="Pfam" id="PF19086">
    <property type="entry name" value="Terpene_syn_C_2"/>
    <property type="match status" value="1"/>
</dbReference>
<dbReference type="SFLD" id="SFLDS00005">
    <property type="entry name" value="Isoprenoid_Synthase_Type_I"/>
    <property type="match status" value="1"/>
</dbReference>
<dbReference type="SFLD" id="SFLDG01020">
    <property type="entry name" value="Terpene_Cyclase_Like_2"/>
    <property type="match status" value="1"/>
</dbReference>
<dbReference type="SUPFAM" id="SSF48576">
    <property type="entry name" value="Terpenoid synthases"/>
    <property type="match status" value="1"/>
</dbReference>
<feature type="chain" id="PRO_0000443247" description="(+)-corvol ether B synthase/(+)-corvol ether A synthase ((2E,6E)-farnesyl diphosphate cyclizing)">
    <location>
        <begin position="1"/>
        <end position="320"/>
    </location>
</feature>
<feature type="short sequence motif" description="DDXXXD motif" evidence="1">
    <location>
        <begin position="78"/>
        <end position="83"/>
    </location>
</feature>
<feature type="binding site" evidence="1">
    <location>
        <position position="78"/>
    </location>
    <ligand>
        <name>Mg(2+)</name>
        <dbReference type="ChEBI" id="CHEBI:18420"/>
        <label>1</label>
    </ligand>
</feature>
<feature type="binding site" evidence="1">
    <location>
        <position position="83"/>
    </location>
    <ligand>
        <name>Mg(2+)</name>
        <dbReference type="ChEBI" id="CHEBI:18420"/>
        <label>1</label>
    </ligand>
</feature>
<feature type="binding site" evidence="1">
    <location>
        <position position="83"/>
    </location>
    <ligand>
        <name>Mg(2+)</name>
        <dbReference type="ChEBI" id="CHEBI:18420"/>
        <label>2</label>
    </ligand>
</feature>
<feature type="binding site" evidence="1">
    <location>
        <position position="171"/>
    </location>
    <ligand>
        <name>substrate</name>
    </ligand>
</feature>
<feature type="binding site" evidence="1">
    <location>
        <position position="217"/>
    </location>
    <ligand>
        <name>Mg(2+)</name>
        <dbReference type="ChEBI" id="CHEBI:18420"/>
        <label>3</label>
    </ligand>
</feature>
<feature type="binding site" evidence="1">
    <location>
        <position position="221"/>
    </location>
    <ligand>
        <name>Mg(2+)</name>
        <dbReference type="ChEBI" id="CHEBI:18420"/>
        <label>3</label>
    </ligand>
</feature>
<feature type="binding site" evidence="1">
    <location>
        <position position="225"/>
    </location>
    <ligand>
        <name>Mg(2+)</name>
        <dbReference type="ChEBI" id="CHEBI:18420"/>
        <label>3</label>
    </ligand>
</feature>
<feature type="site" description="Plays a critical role in the stabilization of intermediate cation" evidence="1">
    <location>
        <position position="75"/>
    </location>
</feature>
<feature type="site" description="Plays a critical role for substrate recognition" evidence="1">
    <location>
        <position position="79"/>
    </location>
</feature>
<name>CEABS_KITSK</name>